<proteinExistence type="inferred from homology"/>
<feature type="chain" id="PRO_0000168878" description="Protein YciI">
    <location>
        <begin position="1"/>
        <end position="98"/>
    </location>
</feature>
<sequence length="98" mass="10602">MLYVIYAQDKADSLEKRLSVRPAHLARLQLLHDEGRLLTAGPMPAVDSNDPGAAGFTGSTVIAEFESLEAAQAWADADPYVAAGVYEHVSVKPFKKVF</sequence>
<reference key="1">
    <citation type="journal article" date="2002" name="Nucleic Acids Res.">
        <title>Genome sequence of Shigella flexneri 2a: insights into pathogenicity through comparison with genomes of Escherichia coli K12 and O157.</title>
        <authorList>
            <person name="Jin Q."/>
            <person name="Yuan Z."/>
            <person name="Xu J."/>
            <person name="Wang Y."/>
            <person name="Shen Y."/>
            <person name="Lu W."/>
            <person name="Wang J."/>
            <person name="Liu H."/>
            <person name="Yang J."/>
            <person name="Yang F."/>
            <person name="Zhang X."/>
            <person name="Zhang J."/>
            <person name="Yang G."/>
            <person name="Wu H."/>
            <person name="Qu D."/>
            <person name="Dong J."/>
            <person name="Sun L."/>
            <person name="Xue Y."/>
            <person name="Zhao A."/>
            <person name="Gao Y."/>
            <person name="Zhu J."/>
            <person name="Kan B."/>
            <person name="Ding K."/>
            <person name="Chen S."/>
            <person name="Cheng H."/>
            <person name="Yao Z."/>
            <person name="He B."/>
            <person name="Chen R."/>
            <person name="Ma D."/>
            <person name="Qiang B."/>
            <person name="Wen Y."/>
            <person name="Hou Y."/>
            <person name="Yu J."/>
        </authorList>
    </citation>
    <scope>NUCLEOTIDE SEQUENCE [LARGE SCALE GENOMIC DNA]</scope>
    <source>
        <strain>301 / Serotype 2a</strain>
    </source>
</reference>
<reference key="2">
    <citation type="journal article" date="2003" name="Infect. Immun.">
        <title>Complete genome sequence and comparative genomics of Shigella flexneri serotype 2a strain 2457T.</title>
        <authorList>
            <person name="Wei J."/>
            <person name="Goldberg M.B."/>
            <person name="Burland V."/>
            <person name="Venkatesan M.M."/>
            <person name="Deng W."/>
            <person name="Fournier G."/>
            <person name="Mayhew G.F."/>
            <person name="Plunkett G. III"/>
            <person name="Rose D.J."/>
            <person name="Darling A."/>
            <person name="Mau B."/>
            <person name="Perna N.T."/>
            <person name="Payne S.M."/>
            <person name="Runyen-Janecky L.J."/>
            <person name="Zhou S."/>
            <person name="Schwartz D.C."/>
            <person name="Blattner F.R."/>
        </authorList>
    </citation>
    <scope>NUCLEOTIDE SEQUENCE [LARGE SCALE GENOMIC DNA]</scope>
    <source>
        <strain>ATCC 700930 / 2457T / Serotype 2a</strain>
    </source>
</reference>
<gene>
    <name type="primary">yciI</name>
    <name type="ordered locus">SF1254</name>
    <name type="ordered locus">S1340</name>
</gene>
<dbReference type="EMBL" id="AE005674">
    <property type="protein sequence ID" value="AAN42867.1"/>
    <property type="status" value="ALT_INIT"/>
    <property type="molecule type" value="Genomic_DNA"/>
</dbReference>
<dbReference type="EMBL" id="AE014073">
    <property type="protein sequence ID" value="AAP16752.1"/>
    <property type="status" value="ALT_INIT"/>
    <property type="molecule type" value="Genomic_DNA"/>
</dbReference>
<dbReference type="RefSeq" id="WP_000967595.1">
    <property type="nucleotide sequence ID" value="NZ_WPGW01000009.1"/>
</dbReference>
<dbReference type="SMR" id="P0AB57"/>
<dbReference type="STRING" id="198214.SF1254"/>
<dbReference type="PaxDb" id="198214-SF1254"/>
<dbReference type="KEGG" id="sfx:S1340"/>
<dbReference type="PATRIC" id="fig|623.156.peg.698"/>
<dbReference type="HOGENOM" id="CLU_110355_3_0_6"/>
<dbReference type="Proteomes" id="UP000001006">
    <property type="component" value="Chromosome"/>
</dbReference>
<dbReference type="Proteomes" id="UP000002673">
    <property type="component" value="Chromosome"/>
</dbReference>
<dbReference type="FunFam" id="3.30.70.1060:FF:000001">
    <property type="entry name" value="YciI family protein"/>
    <property type="match status" value="1"/>
</dbReference>
<dbReference type="Gene3D" id="3.30.70.1060">
    <property type="entry name" value="Dimeric alpha+beta barrel"/>
    <property type="match status" value="1"/>
</dbReference>
<dbReference type="InterPro" id="IPR011008">
    <property type="entry name" value="Dimeric_a/b-barrel"/>
</dbReference>
<dbReference type="InterPro" id="IPR051807">
    <property type="entry name" value="Sec-metab_biosynth-assoc"/>
</dbReference>
<dbReference type="InterPro" id="IPR005545">
    <property type="entry name" value="YCII"/>
</dbReference>
<dbReference type="NCBIfam" id="NF008473">
    <property type="entry name" value="PRK11370.1"/>
    <property type="match status" value="1"/>
</dbReference>
<dbReference type="PANTHER" id="PTHR33606">
    <property type="entry name" value="PROTEIN YCII"/>
    <property type="match status" value="1"/>
</dbReference>
<dbReference type="PANTHER" id="PTHR33606:SF3">
    <property type="entry name" value="PROTEIN YCII"/>
    <property type="match status" value="1"/>
</dbReference>
<dbReference type="Pfam" id="PF03795">
    <property type="entry name" value="YCII"/>
    <property type="match status" value="1"/>
</dbReference>
<dbReference type="SUPFAM" id="SSF54909">
    <property type="entry name" value="Dimeric alpha+beta barrel"/>
    <property type="match status" value="1"/>
</dbReference>
<accession>P0AB57</accession>
<accession>P31070</accession>
<accession>P76029</accession>
<organism>
    <name type="scientific">Shigella flexneri</name>
    <dbReference type="NCBI Taxonomy" id="623"/>
    <lineage>
        <taxon>Bacteria</taxon>
        <taxon>Pseudomonadati</taxon>
        <taxon>Pseudomonadota</taxon>
        <taxon>Gammaproteobacteria</taxon>
        <taxon>Enterobacterales</taxon>
        <taxon>Enterobacteriaceae</taxon>
        <taxon>Shigella</taxon>
    </lineage>
</organism>
<keyword id="KW-1185">Reference proteome</keyword>
<name>YCII_SHIFL</name>
<protein>
    <recommendedName>
        <fullName>Protein YciI</fullName>
    </recommendedName>
</protein>
<evidence type="ECO:0000250" key="1"/>
<evidence type="ECO:0000305" key="2"/>
<comment type="subunit">
    <text evidence="1">Homodimer.</text>
</comment>
<comment type="similarity">
    <text evidence="2">Belongs to the YciI family.</text>
</comment>
<comment type="sequence caution" evidence="2">
    <conflict type="erroneous initiation">
        <sequence resource="EMBL-CDS" id="AAN42867"/>
    </conflict>
</comment>
<comment type="sequence caution" evidence="2">
    <conflict type="erroneous initiation">
        <sequence resource="EMBL-CDS" id="AAP16752"/>
    </conflict>
</comment>